<evidence type="ECO:0000255" key="1">
    <source>
        <dbReference type="HAMAP-Rule" id="MF_01825"/>
    </source>
</evidence>
<keyword id="KW-0963">Cytoplasm</keyword>
<keyword id="KW-0520">NAD</keyword>
<keyword id="KW-0560">Oxidoreductase</keyword>
<keyword id="KW-0664">Pyridoxine biosynthesis</keyword>
<keyword id="KW-1185">Reference proteome</keyword>
<organism>
    <name type="scientific">Escherichia coli O45:K1 (strain S88 / ExPEC)</name>
    <dbReference type="NCBI Taxonomy" id="585035"/>
    <lineage>
        <taxon>Bacteria</taxon>
        <taxon>Pseudomonadati</taxon>
        <taxon>Pseudomonadota</taxon>
        <taxon>Gammaproteobacteria</taxon>
        <taxon>Enterobacterales</taxon>
        <taxon>Enterobacteriaceae</taxon>
        <taxon>Escherichia</taxon>
    </lineage>
</organism>
<comment type="function">
    <text evidence="1">Catalyzes the oxidation of erythronate-4-phosphate to 3-hydroxy-2-oxo-4-phosphonooxybutanoate.</text>
</comment>
<comment type="catalytic activity">
    <reaction evidence="1">
        <text>4-phospho-D-erythronate + NAD(+) = (R)-3-hydroxy-2-oxo-4-phosphooxybutanoate + NADH + H(+)</text>
        <dbReference type="Rhea" id="RHEA:18829"/>
        <dbReference type="ChEBI" id="CHEBI:15378"/>
        <dbReference type="ChEBI" id="CHEBI:57540"/>
        <dbReference type="ChEBI" id="CHEBI:57945"/>
        <dbReference type="ChEBI" id="CHEBI:58538"/>
        <dbReference type="ChEBI" id="CHEBI:58766"/>
        <dbReference type="EC" id="1.1.1.290"/>
    </reaction>
</comment>
<comment type="pathway">
    <text evidence="1">Cofactor biosynthesis; pyridoxine 5'-phosphate biosynthesis; pyridoxine 5'-phosphate from D-erythrose 4-phosphate: step 2/5.</text>
</comment>
<comment type="subunit">
    <text evidence="1">Homodimer.</text>
</comment>
<comment type="subcellular location">
    <subcellularLocation>
        <location evidence="1">Cytoplasm</location>
    </subcellularLocation>
</comment>
<comment type="similarity">
    <text evidence="1">Belongs to the D-isomer specific 2-hydroxyacid dehydrogenase family. PdxB subfamily.</text>
</comment>
<dbReference type="EC" id="1.1.1.290" evidence="1"/>
<dbReference type="EMBL" id="CU928161">
    <property type="protein sequence ID" value="CAR03746.1"/>
    <property type="molecule type" value="Genomic_DNA"/>
</dbReference>
<dbReference type="RefSeq" id="WP_000699136.1">
    <property type="nucleotide sequence ID" value="NC_011742.1"/>
</dbReference>
<dbReference type="SMR" id="B7MG84"/>
<dbReference type="KEGG" id="ecz:ECS88_2468"/>
<dbReference type="HOGENOM" id="CLU_019796_4_0_6"/>
<dbReference type="UniPathway" id="UPA00244">
    <property type="reaction ID" value="UER00310"/>
</dbReference>
<dbReference type="Proteomes" id="UP000000747">
    <property type="component" value="Chromosome"/>
</dbReference>
<dbReference type="GO" id="GO:0005829">
    <property type="term" value="C:cytosol"/>
    <property type="evidence" value="ECO:0007669"/>
    <property type="project" value="UniProtKB-ARBA"/>
</dbReference>
<dbReference type="GO" id="GO:0033711">
    <property type="term" value="F:4-phosphoerythronate dehydrogenase activity"/>
    <property type="evidence" value="ECO:0007669"/>
    <property type="project" value="UniProtKB-EC"/>
</dbReference>
<dbReference type="GO" id="GO:0051287">
    <property type="term" value="F:NAD binding"/>
    <property type="evidence" value="ECO:0007669"/>
    <property type="project" value="InterPro"/>
</dbReference>
<dbReference type="GO" id="GO:0046983">
    <property type="term" value="F:protein dimerization activity"/>
    <property type="evidence" value="ECO:0007669"/>
    <property type="project" value="InterPro"/>
</dbReference>
<dbReference type="GO" id="GO:0036001">
    <property type="term" value="P:'de novo' pyridoxal 5'-phosphate biosynthetic process"/>
    <property type="evidence" value="ECO:0007669"/>
    <property type="project" value="TreeGrafter"/>
</dbReference>
<dbReference type="GO" id="GO:0008615">
    <property type="term" value="P:pyridoxine biosynthetic process"/>
    <property type="evidence" value="ECO:0007669"/>
    <property type="project" value="UniProtKB-UniRule"/>
</dbReference>
<dbReference type="CDD" id="cd12158">
    <property type="entry name" value="ErythrP_dh"/>
    <property type="match status" value="1"/>
</dbReference>
<dbReference type="FunFam" id="3.30.1370.170:FF:000001">
    <property type="entry name" value="Erythronate-4-phosphate dehydrogenase"/>
    <property type="match status" value="1"/>
</dbReference>
<dbReference type="FunFam" id="3.40.50.720:FF:000093">
    <property type="entry name" value="Erythronate-4-phosphate dehydrogenase"/>
    <property type="match status" value="1"/>
</dbReference>
<dbReference type="Gene3D" id="3.30.1370.170">
    <property type="match status" value="1"/>
</dbReference>
<dbReference type="Gene3D" id="3.40.50.720">
    <property type="entry name" value="NAD(P)-binding Rossmann-like Domain"/>
    <property type="match status" value="2"/>
</dbReference>
<dbReference type="HAMAP" id="MF_01825">
    <property type="entry name" value="PdxB"/>
    <property type="match status" value="1"/>
</dbReference>
<dbReference type="InterPro" id="IPR006139">
    <property type="entry name" value="D-isomer_2_OHA_DH_cat_dom"/>
</dbReference>
<dbReference type="InterPro" id="IPR029753">
    <property type="entry name" value="D-isomer_DH_CS"/>
</dbReference>
<dbReference type="InterPro" id="IPR029752">
    <property type="entry name" value="D-isomer_DH_CS1"/>
</dbReference>
<dbReference type="InterPro" id="IPR006140">
    <property type="entry name" value="D-isomer_DH_NAD-bd"/>
</dbReference>
<dbReference type="InterPro" id="IPR020921">
    <property type="entry name" value="Erythronate-4-P_DHase"/>
</dbReference>
<dbReference type="InterPro" id="IPR024531">
    <property type="entry name" value="Erythronate-4-P_DHase_dimer"/>
</dbReference>
<dbReference type="InterPro" id="IPR036291">
    <property type="entry name" value="NAD(P)-bd_dom_sf"/>
</dbReference>
<dbReference type="InterPro" id="IPR038251">
    <property type="entry name" value="PdxB_dimer_sf"/>
</dbReference>
<dbReference type="NCBIfam" id="NF001309">
    <property type="entry name" value="PRK00257.1"/>
    <property type="match status" value="1"/>
</dbReference>
<dbReference type="NCBIfam" id="NF011966">
    <property type="entry name" value="PRK15438.1"/>
    <property type="match status" value="1"/>
</dbReference>
<dbReference type="PANTHER" id="PTHR42938">
    <property type="entry name" value="FORMATE DEHYDROGENASE 1"/>
    <property type="match status" value="1"/>
</dbReference>
<dbReference type="PANTHER" id="PTHR42938:SF9">
    <property type="entry name" value="FORMATE DEHYDROGENASE 1"/>
    <property type="match status" value="1"/>
</dbReference>
<dbReference type="Pfam" id="PF00389">
    <property type="entry name" value="2-Hacid_dh"/>
    <property type="match status" value="1"/>
</dbReference>
<dbReference type="Pfam" id="PF02826">
    <property type="entry name" value="2-Hacid_dh_C"/>
    <property type="match status" value="1"/>
</dbReference>
<dbReference type="Pfam" id="PF11890">
    <property type="entry name" value="DUF3410"/>
    <property type="match status" value="1"/>
</dbReference>
<dbReference type="SUPFAM" id="SSF52283">
    <property type="entry name" value="Formate/glycerate dehydrogenase catalytic domain-like"/>
    <property type="match status" value="1"/>
</dbReference>
<dbReference type="SUPFAM" id="SSF51735">
    <property type="entry name" value="NAD(P)-binding Rossmann-fold domains"/>
    <property type="match status" value="1"/>
</dbReference>
<dbReference type="PROSITE" id="PS00065">
    <property type="entry name" value="D_2_HYDROXYACID_DH_1"/>
    <property type="match status" value="1"/>
</dbReference>
<dbReference type="PROSITE" id="PS00671">
    <property type="entry name" value="D_2_HYDROXYACID_DH_3"/>
    <property type="match status" value="1"/>
</dbReference>
<gene>
    <name evidence="1" type="primary">pdxB</name>
    <name type="ordered locus">ECS88_2468</name>
</gene>
<proteinExistence type="inferred from homology"/>
<sequence>MKILVDENMPYARDLFSRLGEVTAVPGRPIPVAQLADADALMVRSVTKVNESLLAGKPIKFVGTATAGTDHVDEAWLKQAGIGFSAAPGCNAIAVVEYVFSSLLMLAERDGFSLHERTVGIVGVGNVGRRLQARLEALGIKTLLCDPPRADRGDEGDFRSLDELVQHADILTFHTPLFKDGPYKTLHLADEKLIRSLKPGAILINACRGAVVDNTALLTCLSEGQKLSVVLDVWEGEPELNVELLKKVDIGTPHIAGYTLEGKARGTTQVFEAYSKFIGHEQHVALDTLLPAPEFGRITLHGPLDQPTLKRLVHLVYDVRRDDAPLRKVAGIPGEFDKLRKNYLERREWSSLYVICDDASAASLLCKLGFNAVHHPAR</sequence>
<name>PDXB_ECO45</name>
<feature type="chain" id="PRO_1000188259" description="Erythronate-4-phosphate dehydrogenase">
    <location>
        <begin position="1"/>
        <end position="378"/>
    </location>
</feature>
<feature type="active site" evidence="1">
    <location>
        <position position="208"/>
    </location>
</feature>
<feature type="active site" evidence="1">
    <location>
        <position position="237"/>
    </location>
</feature>
<feature type="active site" description="Proton donor" evidence="1">
    <location>
        <position position="254"/>
    </location>
</feature>
<feature type="binding site" evidence="1">
    <location>
        <position position="45"/>
    </location>
    <ligand>
        <name>substrate</name>
    </ligand>
</feature>
<feature type="binding site" evidence="1">
    <location>
        <position position="66"/>
    </location>
    <ligand>
        <name>substrate</name>
    </ligand>
</feature>
<feature type="binding site" evidence="1">
    <location>
        <position position="146"/>
    </location>
    <ligand>
        <name>NAD(+)</name>
        <dbReference type="ChEBI" id="CHEBI:57540"/>
    </ligand>
</feature>
<feature type="binding site" evidence="1">
    <location>
        <position position="175"/>
    </location>
    <ligand>
        <name>NAD(+)</name>
        <dbReference type="ChEBI" id="CHEBI:57540"/>
    </ligand>
</feature>
<feature type="binding site" evidence="1">
    <location>
        <position position="232"/>
    </location>
    <ligand>
        <name>NAD(+)</name>
        <dbReference type="ChEBI" id="CHEBI:57540"/>
    </ligand>
</feature>
<feature type="binding site" evidence="1">
    <location>
        <position position="257"/>
    </location>
    <ligand>
        <name>NAD(+)</name>
        <dbReference type="ChEBI" id="CHEBI:57540"/>
    </ligand>
</feature>
<feature type="binding site" evidence="1">
    <location>
        <position position="258"/>
    </location>
    <ligand>
        <name>substrate</name>
    </ligand>
</feature>
<reference key="1">
    <citation type="journal article" date="2009" name="PLoS Genet.">
        <title>Organised genome dynamics in the Escherichia coli species results in highly diverse adaptive paths.</title>
        <authorList>
            <person name="Touchon M."/>
            <person name="Hoede C."/>
            <person name="Tenaillon O."/>
            <person name="Barbe V."/>
            <person name="Baeriswyl S."/>
            <person name="Bidet P."/>
            <person name="Bingen E."/>
            <person name="Bonacorsi S."/>
            <person name="Bouchier C."/>
            <person name="Bouvet O."/>
            <person name="Calteau A."/>
            <person name="Chiapello H."/>
            <person name="Clermont O."/>
            <person name="Cruveiller S."/>
            <person name="Danchin A."/>
            <person name="Diard M."/>
            <person name="Dossat C."/>
            <person name="Karoui M.E."/>
            <person name="Frapy E."/>
            <person name="Garry L."/>
            <person name="Ghigo J.M."/>
            <person name="Gilles A.M."/>
            <person name="Johnson J."/>
            <person name="Le Bouguenec C."/>
            <person name="Lescat M."/>
            <person name="Mangenot S."/>
            <person name="Martinez-Jehanne V."/>
            <person name="Matic I."/>
            <person name="Nassif X."/>
            <person name="Oztas S."/>
            <person name="Petit M.A."/>
            <person name="Pichon C."/>
            <person name="Rouy Z."/>
            <person name="Ruf C.S."/>
            <person name="Schneider D."/>
            <person name="Tourret J."/>
            <person name="Vacherie B."/>
            <person name="Vallenet D."/>
            <person name="Medigue C."/>
            <person name="Rocha E.P.C."/>
            <person name="Denamur E."/>
        </authorList>
    </citation>
    <scope>NUCLEOTIDE SEQUENCE [LARGE SCALE GENOMIC DNA]</scope>
    <source>
        <strain>S88 / ExPEC</strain>
    </source>
</reference>
<accession>B7MG84</accession>
<protein>
    <recommendedName>
        <fullName evidence="1">Erythronate-4-phosphate dehydrogenase</fullName>
        <ecNumber evidence="1">1.1.1.290</ecNumber>
    </recommendedName>
</protein>